<accession>C4ZZX9</accession>
<comment type="function">
    <text evidence="1">Catalyzes the reductive methylation of 2'-deoxyuridine-5'-monophosphate (dUMP) to 2'-deoxythymidine-5'-monophosphate (dTMP) while utilizing 5,10-methylenetetrahydrofolate (mTHF) as the methyl donor and reductant in the reaction, yielding dihydrofolate (DHF) as a by-product. This enzymatic reaction provides an intracellular de novo source of dTMP, an essential precursor for DNA biosynthesis.</text>
</comment>
<comment type="catalytic activity">
    <reaction evidence="1">
        <text>dUMP + (6R)-5,10-methylene-5,6,7,8-tetrahydrofolate = 7,8-dihydrofolate + dTMP</text>
        <dbReference type="Rhea" id="RHEA:12104"/>
        <dbReference type="ChEBI" id="CHEBI:15636"/>
        <dbReference type="ChEBI" id="CHEBI:57451"/>
        <dbReference type="ChEBI" id="CHEBI:63528"/>
        <dbReference type="ChEBI" id="CHEBI:246422"/>
        <dbReference type="EC" id="2.1.1.45"/>
    </reaction>
</comment>
<comment type="pathway">
    <text evidence="1">Pyrimidine metabolism; dTTP biosynthesis.</text>
</comment>
<comment type="subunit">
    <text evidence="1">Homodimer.</text>
</comment>
<comment type="subcellular location">
    <subcellularLocation>
        <location evidence="1">Cytoplasm</location>
    </subcellularLocation>
</comment>
<comment type="similarity">
    <text evidence="1">Belongs to the thymidylate synthase family. Bacterial-type ThyA subfamily.</text>
</comment>
<name>TYSY_ECOBW</name>
<feature type="chain" id="PRO_1000201717" description="Thymidylate synthase">
    <location>
        <begin position="1"/>
        <end position="264"/>
    </location>
</feature>
<feature type="active site" description="Nucleophile" evidence="1">
    <location>
        <position position="146"/>
    </location>
</feature>
<feature type="binding site" description="in other chain" evidence="1">
    <location>
        <position position="21"/>
    </location>
    <ligand>
        <name>dUMP</name>
        <dbReference type="ChEBI" id="CHEBI:246422"/>
        <note>ligand shared between dimeric partners</note>
    </ligand>
</feature>
<feature type="binding site" evidence="1">
    <location>
        <position position="51"/>
    </location>
    <ligand>
        <name>(6R)-5,10-methylene-5,6,7,8-tetrahydrofolate</name>
        <dbReference type="ChEBI" id="CHEBI:15636"/>
    </ligand>
</feature>
<feature type="binding site" evidence="1">
    <location>
        <begin position="126"/>
        <end position="127"/>
    </location>
    <ligand>
        <name>dUMP</name>
        <dbReference type="ChEBI" id="CHEBI:246422"/>
        <note>ligand shared between dimeric partners</note>
    </ligand>
</feature>
<feature type="binding site" description="in other chain" evidence="1">
    <location>
        <begin position="166"/>
        <end position="169"/>
    </location>
    <ligand>
        <name>dUMP</name>
        <dbReference type="ChEBI" id="CHEBI:246422"/>
        <note>ligand shared between dimeric partners</note>
    </ligand>
</feature>
<feature type="binding site" evidence="1">
    <location>
        <position position="169"/>
    </location>
    <ligand>
        <name>(6R)-5,10-methylene-5,6,7,8-tetrahydrofolate</name>
        <dbReference type="ChEBI" id="CHEBI:15636"/>
    </ligand>
</feature>
<feature type="binding site" description="in other chain" evidence="1">
    <location>
        <position position="177"/>
    </location>
    <ligand>
        <name>dUMP</name>
        <dbReference type="ChEBI" id="CHEBI:246422"/>
        <note>ligand shared between dimeric partners</note>
    </ligand>
</feature>
<feature type="binding site" description="in other chain" evidence="1">
    <location>
        <begin position="207"/>
        <end position="209"/>
    </location>
    <ligand>
        <name>dUMP</name>
        <dbReference type="ChEBI" id="CHEBI:246422"/>
        <note>ligand shared between dimeric partners</note>
    </ligand>
</feature>
<feature type="binding site" evidence="1">
    <location>
        <position position="263"/>
    </location>
    <ligand>
        <name>(6R)-5,10-methylene-5,6,7,8-tetrahydrofolate</name>
        <dbReference type="ChEBI" id="CHEBI:15636"/>
    </ligand>
</feature>
<organism>
    <name type="scientific">Escherichia coli (strain K12 / MC4100 / BW2952)</name>
    <dbReference type="NCBI Taxonomy" id="595496"/>
    <lineage>
        <taxon>Bacteria</taxon>
        <taxon>Pseudomonadati</taxon>
        <taxon>Pseudomonadota</taxon>
        <taxon>Gammaproteobacteria</taxon>
        <taxon>Enterobacterales</taxon>
        <taxon>Enterobacteriaceae</taxon>
        <taxon>Escherichia</taxon>
    </lineage>
</organism>
<evidence type="ECO:0000255" key="1">
    <source>
        <dbReference type="HAMAP-Rule" id="MF_00008"/>
    </source>
</evidence>
<gene>
    <name evidence="1" type="primary">thyA</name>
    <name type="ordered locus">BWG_2562</name>
</gene>
<sequence length="264" mass="30480">MKQYLELMQKVLDEGTQKNDRTGTGTLSIFGHQMRFNLQDGFPLVTTKRCHLRSIIHELLWFLQGDTNIAYLHENNVTIWDEWADENGDLGPVYGKQWRAWPTPDGRHIDQITTVLNQLKNDPDSRRIIVSAWNVGELDKMALAPCHAFFQFYVADGKLSCQLYQRSCDVFLGLPFNIASYALLVHMMAQQCDLEVGDFVWTGGDTHLYSNHMDQTHLQLSREPRPLPKLIIKRKPESIFDYRFEDFEIEGYDPHPGIKAPVAI</sequence>
<reference key="1">
    <citation type="journal article" date="2009" name="J. Bacteriol.">
        <title>Genomic sequencing reveals regulatory mutations and recombinational events in the widely used MC4100 lineage of Escherichia coli K-12.</title>
        <authorList>
            <person name="Ferenci T."/>
            <person name="Zhou Z."/>
            <person name="Betteridge T."/>
            <person name="Ren Y."/>
            <person name="Liu Y."/>
            <person name="Feng L."/>
            <person name="Reeves P.R."/>
            <person name="Wang L."/>
        </authorList>
    </citation>
    <scope>NUCLEOTIDE SEQUENCE [LARGE SCALE GENOMIC DNA]</scope>
    <source>
        <strain>K12 / MC4100 / BW2952</strain>
    </source>
</reference>
<keyword id="KW-0963">Cytoplasm</keyword>
<keyword id="KW-0489">Methyltransferase</keyword>
<keyword id="KW-0545">Nucleotide biosynthesis</keyword>
<keyword id="KW-0808">Transferase</keyword>
<proteinExistence type="inferred from homology"/>
<protein>
    <recommendedName>
        <fullName evidence="1">Thymidylate synthase</fullName>
        <shortName evidence="1">TS</shortName>
        <shortName evidence="1">TSase</shortName>
        <ecNumber evidence="1">2.1.1.45</ecNumber>
    </recommendedName>
</protein>
<dbReference type="EC" id="2.1.1.45" evidence="1"/>
<dbReference type="EMBL" id="CP001396">
    <property type="protein sequence ID" value="ACR65659.1"/>
    <property type="molecule type" value="Genomic_DNA"/>
</dbReference>
<dbReference type="RefSeq" id="WP_000816232.1">
    <property type="nucleotide sequence ID" value="NC_012759.1"/>
</dbReference>
<dbReference type="SMR" id="C4ZZX9"/>
<dbReference type="GeneID" id="93779171"/>
<dbReference type="KEGG" id="ebw:BWG_2562"/>
<dbReference type="HOGENOM" id="CLU_021669_0_0_6"/>
<dbReference type="UniPathway" id="UPA00575"/>
<dbReference type="GO" id="GO:0005829">
    <property type="term" value="C:cytosol"/>
    <property type="evidence" value="ECO:0007669"/>
    <property type="project" value="TreeGrafter"/>
</dbReference>
<dbReference type="GO" id="GO:0004799">
    <property type="term" value="F:thymidylate synthase activity"/>
    <property type="evidence" value="ECO:0007669"/>
    <property type="project" value="UniProtKB-UniRule"/>
</dbReference>
<dbReference type="GO" id="GO:0006231">
    <property type="term" value="P:dTMP biosynthetic process"/>
    <property type="evidence" value="ECO:0007669"/>
    <property type="project" value="UniProtKB-UniRule"/>
</dbReference>
<dbReference type="GO" id="GO:0006235">
    <property type="term" value="P:dTTP biosynthetic process"/>
    <property type="evidence" value="ECO:0007669"/>
    <property type="project" value="UniProtKB-UniRule"/>
</dbReference>
<dbReference type="GO" id="GO:0032259">
    <property type="term" value="P:methylation"/>
    <property type="evidence" value="ECO:0007669"/>
    <property type="project" value="UniProtKB-KW"/>
</dbReference>
<dbReference type="CDD" id="cd00351">
    <property type="entry name" value="TS_Pyrimidine_HMase"/>
    <property type="match status" value="1"/>
</dbReference>
<dbReference type="FunFam" id="3.30.572.10:FF:000001">
    <property type="entry name" value="Thymidylate synthase"/>
    <property type="match status" value="1"/>
</dbReference>
<dbReference type="Gene3D" id="3.30.572.10">
    <property type="entry name" value="Thymidylate synthase/dCMP hydroxymethylase domain"/>
    <property type="match status" value="1"/>
</dbReference>
<dbReference type="HAMAP" id="MF_00008">
    <property type="entry name" value="Thymidy_synth_bact"/>
    <property type="match status" value="1"/>
</dbReference>
<dbReference type="InterPro" id="IPR045097">
    <property type="entry name" value="Thymidate_synth/dCMP_Mease"/>
</dbReference>
<dbReference type="InterPro" id="IPR023451">
    <property type="entry name" value="Thymidate_synth/dCMP_Mease_dom"/>
</dbReference>
<dbReference type="InterPro" id="IPR036926">
    <property type="entry name" value="Thymidate_synth/dCMP_Mease_sf"/>
</dbReference>
<dbReference type="InterPro" id="IPR000398">
    <property type="entry name" value="Thymidylate_synthase"/>
</dbReference>
<dbReference type="InterPro" id="IPR020940">
    <property type="entry name" value="Thymidylate_synthase_AS"/>
</dbReference>
<dbReference type="NCBIfam" id="NF002497">
    <property type="entry name" value="PRK01827.1-3"/>
    <property type="match status" value="1"/>
</dbReference>
<dbReference type="NCBIfam" id="NF002499">
    <property type="entry name" value="PRK01827.1-5"/>
    <property type="match status" value="1"/>
</dbReference>
<dbReference type="NCBIfam" id="TIGR03284">
    <property type="entry name" value="thym_sym"/>
    <property type="match status" value="2"/>
</dbReference>
<dbReference type="PANTHER" id="PTHR11548:SF9">
    <property type="entry name" value="THYMIDYLATE SYNTHASE"/>
    <property type="match status" value="1"/>
</dbReference>
<dbReference type="PANTHER" id="PTHR11548">
    <property type="entry name" value="THYMIDYLATE SYNTHASE 1"/>
    <property type="match status" value="1"/>
</dbReference>
<dbReference type="Pfam" id="PF00303">
    <property type="entry name" value="Thymidylat_synt"/>
    <property type="match status" value="1"/>
</dbReference>
<dbReference type="PRINTS" id="PR00108">
    <property type="entry name" value="THYMDSNTHASE"/>
</dbReference>
<dbReference type="SUPFAM" id="SSF55831">
    <property type="entry name" value="Thymidylate synthase/dCMP hydroxymethylase"/>
    <property type="match status" value="1"/>
</dbReference>
<dbReference type="PROSITE" id="PS00091">
    <property type="entry name" value="THYMIDYLATE_SYNTHASE"/>
    <property type="match status" value="1"/>
</dbReference>